<sequence length="439" mass="49017">NETWWYNPYMDIHSHWKQFDQVPAAVYYSLGIFIAICGIIGCAGNGIVIYLFTKTKSLQTPANMFIINLAFSDFTFSLVNGFPMMTISCFLKHWVFGQAACKVYGLIGGIFGLTSIMTMTMISIDRYNVIRRPMSASKKMSHRKAFIMIVFVWIWSTIWAIGPIFGWGAYQLEGVLCNCSFDYITRDASTRSNIVCMYIFAFMFPIVVIFFCYFNIVMSVSNHEKEMAAMAKRLNAKELRKAQAGASAEMKLAKISIVIVTQSLLSWSPYAIVALLAQFGPIEWVTPYAAQLPVMFAKASAIHNPMIYSVSHPKFREAIASNFPWILTCCQYDEKEIEDDKDAEAEIPAAEQSGGESVDAAQMKEMMAMMQKMQAQQQQQPAYPPQGYPPQGYPPPPPQGYPPQGYPPQGYPPQGYPPPPQGPPPQGPPPQAAPPQGVD</sequence>
<name>OPSD_ALLSU</name>
<gene>
    <name type="primary">RHO</name>
</gene>
<organism>
    <name type="scientific">Alloteuthis subulata</name>
    <name type="common">Squid</name>
    <name type="synonym">Loligo subulata</name>
    <dbReference type="NCBI Taxonomy" id="54069"/>
    <lineage>
        <taxon>Eukaryota</taxon>
        <taxon>Metazoa</taxon>
        <taxon>Spiralia</taxon>
        <taxon>Lophotrochozoa</taxon>
        <taxon>Mollusca</taxon>
        <taxon>Cephalopoda</taxon>
        <taxon>Coleoidea</taxon>
        <taxon>Decapodiformes</taxon>
        <taxon>Myopsida</taxon>
        <taxon>Loliginidae</taxon>
        <taxon>Alloteuthis</taxon>
    </lineage>
</organism>
<keyword id="KW-1003">Cell membrane</keyword>
<keyword id="KW-0966">Cell projection</keyword>
<keyword id="KW-0157">Chromophore</keyword>
<keyword id="KW-1015">Disulfide bond</keyword>
<keyword id="KW-0297">G-protein coupled receptor</keyword>
<keyword id="KW-0325">Glycoprotein</keyword>
<keyword id="KW-0449">Lipoprotein</keyword>
<keyword id="KW-0472">Membrane</keyword>
<keyword id="KW-0564">Palmitate</keyword>
<keyword id="KW-0597">Phosphoprotein</keyword>
<keyword id="KW-0600">Photoreceptor protein</keyword>
<keyword id="KW-0675">Receptor</keyword>
<keyword id="KW-0681">Retinal protein</keyword>
<keyword id="KW-0716">Sensory transduction</keyword>
<keyword id="KW-0807">Transducer</keyword>
<keyword id="KW-0812">Transmembrane</keyword>
<keyword id="KW-1133">Transmembrane helix</keyword>
<keyword id="KW-0844">Vision</keyword>
<feature type="chain" id="PRO_0000197733" description="Rhodopsin">
    <location>
        <begin position="1" status="less than"/>
        <end position="439" status="greater than"/>
    </location>
</feature>
<feature type="topological domain" description="Extracellular" evidence="7">
    <location>
        <begin position="1" status="less than"/>
        <end position="26"/>
    </location>
</feature>
<feature type="transmembrane region" description="Helical; Name=1" evidence="3">
    <location>
        <begin position="27"/>
        <end position="51"/>
    </location>
</feature>
<feature type="topological domain" description="Cytoplasmic" evidence="7">
    <location>
        <begin position="52"/>
        <end position="63"/>
    </location>
</feature>
<feature type="transmembrane region" description="Helical; Name=2" evidence="3">
    <location>
        <begin position="64"/>
        <end position="90"/>
    </location>
</feature>
<feature type="topological domain" description="Extracellular" evidence="7">
    <location>
        <begin position="91"/>
        <end position="102"/>
    </location>
</feature>
<feature type="transmembrane region" description="Helical; Name=3" evidence="3">
    <location>
        <begin position="103"/>
        <end position="124"/>
    </location>
</feature>
<feature type="topological domain" description="Cytoplasmic" evidence="7">
    <location>
        <begin position="125"/>
        <end position="144"/>
    </location>
</feature>
<feature type="transmembrane region" description="Helical; Name=4" evidence="3">
    <location>
        <begin position="145"/>
        <end position="165"/>
    </location>
</feature>
<feature type="topological domain" description="Extracellular" evidence="7">
    <location>
        <begin position="166"/>
        <end position="192"/>
    </location>
</feature>
<feature type="transmembrane region" description="Helical; Name=5" evidence="3">
    <location>
        <begin position="193"/>
        <end position="217"/>
    </location>
</feature>
<feature type="topological domain" description="Cytoplasmic" evidence="7">
    <location>
        <begin position="218"/>
        <end position="254"/>
    </location>
</feature>
<feature type="transmembrane region" description="Helical; Name=6" evidence="3">
    <location>
        <begin position="255"/>
        <end position="276"/>
    </location>
</feature>
<feature type="topological domain" description="Extracellular" evidence="7">
    <location>
        <begin position="277"/>
        <end position="286"/>
    </location>
</feature>
<feature type="transmembrane region" description="Helical; Name=7" evidence="3">
    <location>
        <begin position="287"/>
        <end position="308"/>
    </location>
</feature>
<feature type="topological domain" description="Cytoplasmic" evidence="7">
    <location>
        <begin position="309"/>
        <end position="439"/>
    </location>
</feature>
<feature type="region of interest" description="Disordered" evidence="6">
    <location>
        <begin position="369"/>
        <end position="439"/>
    </location>
</feature>
<feature type="short sequence motif" description="'Ionic lock' involved in activated form stabilization" evidence="1">
    <location>
        <begin position="125"/>
        <end position="127"/>
    </location>
</feature>
<feature type="compositionally biased region" description="Low complexity" evidence="6">
    <location>
        <begin position="369"/>
        <end position="381"/>
    </location>
</feature>
<feature type="compositionally biased region" description="Pro residues" evidence="6">
    <location>
        <begin position="382"/>
        <end position="433"/>
    </location>
</feature>
<feature type="modified residue" description="N6-(retinylidene)lysine" evidence="1">
    <location>
        <position position="298"/>
    </location>
</feature>
<feature type="lipid moiety-binding region" description="S-palmitoyl cysteine" evidence="1">
    <location>
        <position position="329"/>
    </location>
</feature>
<feature type="lipid moiety-binding region" description="S-palmitoyl cysteine" evidence="1">
    <location>
        <position position="330"/>
    </location>
</feature>
<feature type="glycosylation site" description="N-linked (GlcNAc...) asparagine" evidence="4">
    <location>
        <position position="1"/>
    </location>
</feature>
<feature type="disulfide bond" evidence="5">
    <location>
        <begin position="101"/>
        <end position="179"/>
    </location>
</feature>
<feature type="non-terminal residue">
    <location>
        <position position="1"/>
    </location>
</feature>
<feature type="non-terminal residue">
    <location>
        <position position="439"/>
    </location>
</feature>
<protein>
    <recommendedName>
        <fullName>Rhodopsin</fullName>
    </recommendedName>
</protein>
<comment type="function">
    <text evidence="2 3">Photoreceptor required for image-forming vision at low light intensity. Light-induced isomerization of 11-cis to all-trans retinal triggers a conformational change that activates signaling via G-proteins. Signaling mediates the activation of phospholipase C (By similarity). Subsequent receptor phosphorylation mediates displacement of the bound G-protein alpha subunit by arrestin and terminates signaling (By similarity).</text>
</comment>
<comment type="subcellular location">
    <subcellularLocation>
        <location evidence="3">Cell projection</location>
        <location evidence="3">Rhabdomere membrane</location>
        <topology evidence="3">Multi-pass membrane protein</topology>
    </subcellularLocation>
</comment>
<comment type="PTM">
    <text evidence="1 3">Contains one covalently linked retinal chromophore. Upon light absorption, the covalently bound 11-cis-retinal is converted to all-trans-retinal (By similarity). After hydrolysis of the Schiff base and release of the covalently bound all-trans-retinal, active rhodopsin is regenerated by binding of a fresh molecule of 11-cis-retinal (By similarity).</text>
</comment>
<comment type="similarity">
    <text evidence="5">Belongs to the G-protein coupled receptor 1 family. Opsin subfamily.</text>
</comment>
<accession>Q17094</accession>
<dbReference type="EMBL" id="Z49108">
    <property type="protein sequence ID" value="CAA88923.1"/>
    <property type="molecule type" value="Genomic_DNA"/>
</dbReference>
<dbReference type="PIR" id="S60755">
    <property type="entry name" value="S60755"/>
</dbReference>
<dbReference type="SMR" id="Q17094"/>
<dbReference type="GlyCosmos" id="Q17094">
    <property type="glycosylation" value="1 site, No reported glycans"/>
</dbReference>
<dbReference type="GO" id="GO:0042995">
    <property type="term" value="C:cell projection"/>
    <property type="evidence" value="ECO:0007669"/>
    <property type="project" value="UniProtKB-KW"/>
</dbReference>
<dbReference type="GO" id="GO:0016020">
    <property type="term" value="C:membrane"/>
    <property type="evidence" value="ECO:0000250"/>
    <property type="project" value="UniProtKB"/>
</dbReference>
<dbReference type="GO" id="GO:0005886">
    <property type="term" value="C:plasma membrane"/>
    <property type="evidence" value="ECO:0000250"/>
    <property type="project" value="UniProtKB"/>
</dbReference>
<dbReference type="GO" id="GO:0004930">
    <property type="term" value="F:G protein-coupled receptor activity"/>
    <property type="evidence" value="ECO:0007669"/>
    <property type="project" value="UniProtKB-KW"/>
</dbReference>
<dbReference type="GO" id="GO:0009881">
    <property type="term" value="F:photoreceptor activity"/>
    <property type="evidence" value="ECO:0007669"/>
    <property type="project" value="UniProtKB-KW"/>
</dbReference>
<dbReference type="GO" id="GO:0016918">
    <property type="term" value="F:retinal binding"/>
    <property type="evidence" value="ECO:0000250"/>
    <property type="project" value="UniProtKB"/>
</dbReference>
<dbReference type="GO" id="GO:0007602">
    <property type="term" value="P:phototransduction"/>
    <property type="evidence" value="ECO:0007669"/>
    <property type="project" value="UniProtKB-KW"/>
</dbReference>
<dbReference type="GO" id="GO:0007601">
    <property type="term" value="P:visual perception"/>
    <property type="evidence" value="ECO:0007669"/>
    <property type="project" value="UniProtKB-KW"/>
</dbReference>
<dbReference type="CDD" id="cd15337">
    <property type="entry name" value="7tmA_Opsin_Gq_invertebrates"/>
    <property type="match status" value="1"/>
</dbReference>
<dbReference type="FunFam" id="1.20.1070.10:FF:000044">
    <property type="entry name" value="Opsin, ultraviolet-sensitive"/>
    <property type="match status" value="1"/>
</dbReference>
<dbReference type="Gene3D" id="1.20.1070.10">
    <property type="entry name" value="Rhodopsin 7-helix transmembrane proteins"/>
    <property type="match status" value="1"/>
</dbReference>
<dbReference type="InterPro" id="IPR050125">
    <property type="entry name" value="GPCR_opsins"/>
</dbReference>
<dbReference type="InterPro" id="IPR000276">
    <property type="entry name" value="GPCR_Rhodpsn"/>
</dbReference>
<dbReference type="InterPro" id="IPR017452">
    <property type="entry name" value="GPCR_Rhodpsn_7TM"/>
</dbReference>
<dbReference type="InterPro" id="IPR001760">
    <property type="entry name" value="Opsin"/>
</dbReference>
<dbReference type="InterPro" id="IPR027430">
    <property type="entry name" value="Retinal_BS"/>
</dbReference>
<dbReference type="InterPro" id="IPR006031">
    <property type="entry name" value="XYPPX"/>
</dbReference>
<dbReference type="PANTHER" id="PTHR24240">
    <property type="entry name" value="OPSIN"/>
    <property type="match status" value="1"/>
</dbReference>
<dbReference type="Pfam" id="PF00001">
    <property type="entry name" value="7tm_1"/>
    <property type="match status" value="1"/>
</dbReference>
<dbReference type="Pfam" id="PF02162">
    <property type="entry name" value="XYPPX"/>
    <property type="match status" value="3"/>
</dbReference>
<dbReference type="PRINTS" id="PR00237">
    <property type="entry name" value="GPCRRHODOPSN"/>
</dbReference>
<dbReference type="PRINTS" id="PR00238">
    <property type="entry name" value="OPSIN"/>
</dbReference>
<dbReference type="PRINTS" id="PR00239">
    <property type="entry name" value="RHODOPSNTAIL"/>
</dbReference>
<dbReference type="SMART" id="SM01381">
    <property type="entry name" value="7TM_GPCR_Srsx"/>
    <property type="match status" value="1"/>
</dbReference>
<dbReference type="SUPFAM" id="SSF81321">
    <property type="entry name" value="Family A G protein-coupled receptor-like"/>
    <property type="match status" value="1"/>
</dbReference>
<dbReference type="PROSITE" id="PS00237">
    <property type="entry name" value="G_PROTEIN_RECEP_F1_1"/>
    <property type="match status" value="1"/>
</dbReference>
<dbReference type="PROSITE" id="PS50262">
    <property type="entry name" value="G_PROTEIN_RECEP_F1_2"/>
    <property type="match status" value="1"/>
</dbReference>
<dbReference type="PROSITE" id="PS00238">
    <property type="entry name" value="OPSIN"/>
    <property type="match status" value="1"/>
</dbReference>
<reference key="1">
    <citation type="journal article" date="1993" name="Proc. R. Soc. B">
        <title>The molecular basis of a spectral shift in the rhodopsins of two species of squid from different photic environments.</title>
        <authorList>
            <person name="Morris A."/>
            <person name="Bowmaker J.K."/>
            <person name="Hunt D.M."/>
        </authorList>
    </citation>
    <scope>NUCLEOTIDE SEQUENCE [GENOMIC DNA]</scope>
    <source>
        <tissue>Epidermis</tissue>
    </source>
</reference>
<evidence type="ECO:0000250" key="1">
    <source>
        <dbReference type="UniProtKB" id="P02699"/>
    </source>
</evidence>
<evidence type="ECO:0000250" key="2">
    <source>
        <dbReference type="UniProtKB" id="P08100"/>
    </source>
</evidence>
<evidence type="ECO:0000250" key="3">
    <source>
        <dbReference type="UniProtKB" id="P31356"/>
    </source>
</evidence>
<evidence type="ECO:0000255" key="4"/>
<evidence type="ECO:0000255" key="5">
    <source>
        <dbReference type="PROSITE-ProRule" id="PRU00521"/>
    </source>
</evidence>
<evidence type="ECO:0000256" key="6">
    <source>
        <dbReference type="SAM" id="MobiDB-lite"/>
    </source>
</evidence>
<evidence type="ECO:0000305" key="7"/>
<proteinExistence type="inferred from homology"/>